<proteinExistence type="evidence at protein level"/>
<evidence type="ECO:0000250" key="1">
    <source>
        <dbReference type="UniProtKB" id="O43292"/>
    </source>
</evidence>
<evidence type="ECO:0000255" key="2"/>
<evidence type="ECO:0000269" key="3">
    <source>
    </source>
</evidence>
<evidence type="ECO:0000269" key="4">
    <source>
    </source>
</evidence>
<evidence type="ECO:0000305" key="5"/>
<evidence type="ECO:0000312" key="6">
    <source>
        <dbReference type="MGI" id="MGI:1202392"/>
    </source>
</evidence>
<protein>
    <recommendedName>
        <fullName evidence="5">GPI-anchor transamidase component GPAA1</fullName>
    </recommendedName>
    <alternativeName>
        <fullName>GAA1 protein homolog</fullName>
        <shortName>mGAA1</shortName>
    </alternativeName>
    <alternativeName>
        <fullName>Glycosylphosphatidylinositol anchor attachment 1 protein</fullName>
        <shortName>GPI anchor attachment protein 1</shortName>
    </alternativeName>
</protein>
<keyword id="KW-1015">Disulfide bond</keyword>
<keyword id="KW-0256">Endoplasmic reticulum</keyword>
<keyword id="KW-0325">Glycoprotein</keyword>
<keyword id="KW-0337">GPI-anchor biosynthesis</keyword>
<keyword id="KW-0460">Magnesium</keyword>
<keyword id="KW-0472">Membrane</keyword>
<keyword id="KW-0479">Metal-binding</keyword>
<keyword id="KW-1185">Reference proteome</keyword>
<keyword id="KW-0812">Transmembrane</keyword>
<keyword id="KW-1133">Transmembrane helix</keyword>
<sequence>MGLLSDPVRRRALARIVLRLNTPLCVLSYVAGIAWFLALAFPPLTQRTYMSENAMGSTMVEEQFVGGDRARSFARDFAAHRKKPGALPVAWLERSMRSVGLEVYTQSFSRKLPFPDETHERYMVSGTNVYGILRAPRSASTESLVLTVPCGPDATNSQAVGLLLALAAHFRGQIYWAKDIIFLVTDHDLLGTEAWLEAYHDINVTGIQSSPLQGRAGAIQAAVALELSSDVVTSLDVTVEGLNGQLPNLDLLNLFQTFCQKGGLLCTLQGKLQPQDWTSLEGPLQGLQTLLLMVLRQASGRPHGPHGLFLRYGVEALTLRGINSFRQYKYDLATVGKALEGMFRKLNHLLERLHQSFFFYLLPALSRFVSIGLYMPATGFLLLVLGLKALELWMQLHQAGVNPEEAGKAPSPGTPLLPTQGVGLASLTAPLLISQAMGLALYFLPVLGQHLATQHFPVAEAEAVVLTLLAIYVAGLALPHNTHRVVNSQVPDRGWMALKLVALIYLALQLGCIALLNFSLGFLLAATMVPAAALAKPHGPRTLYAALLVVTSPAVTLFGSLFLWRELLEVPLSLAEGWQLFLTALAQGVLEHYTYGALLFPILALGLYPCWLLFWNVLFWK</sequence>
<dbReference type="EMBL" id="AB002136">
    <property type="protein sequence ID" value="BAA82589.1"/>
    <property type="molecule type" value="mRNA"/>
</dbReference>
<dbReference type="EMBL" id="AB002138">
    <property type="protein sequence ID" value="BAA82591.1"/>
    <property type="molecule type" value="Genomic_DNA"/>
</dbReference>
<dbReference type="EMBL" id="AB006970">
    <property type="protein sequence ID" value="BAB03274.1"/>
    <property type="molecule type" value="mRNA"/>
</dbReference>
<dbReference type="EMBL" id="AB006971">
    <property type="protein sequence ID" value="BAB03275.1"/>
    <property type="molecule type" value="Genomic_DNA"/>
</dbReference>
<dbReference type="EMBL" id="AB017266">
    <property type="protein sequence ID" value="BAA82586.1"/>
    <property type="molecule type" value="Genomic_DNA"/>
</dbReference>
<dbReference type="EMBL" id="AK077518">
    <property type="protein sequence ID" value="BAC36840.1"/>
    <property type="molecule type" value="mRNA"/>
</dbReference>
<dbReference type="EMBL" id="AK164219">
    <property type="protein sequence ID" value="BAE37686.1"/>
    <property type="molecule type" value="mRNA"/>
</dbReference>
<dbReference type="EMBL" id="AK164978">
    <property type="protein sequence ID" value="BAE37988.1"/>
    <property type="molecule type" value="mRNA"/>
</dbReference>
<dbReference type="EMBL" id="BC006697">
    <property type="protein sequence ID" value="AAH06697.1"/>
    <property type="molecule type" value="mRNA"/>
</dbReference>
<dbReference type="CCDS" id="CCDS37120.1"/>
<dbReference type="RefSeq" id="NP_034461.1">
    <property type="nucleotide sequence ID" value="NM_010331.2"/>
</dbReference>
<dbReference type="SMR" id="Q9WTK3"/>
<dbReference type="BioGRID" id="200010">
    <property type="interactions" value="2"/>
</dbReference>
<dbReference type="FunCoup" id="Q9WTK3">
    <property type="interactions" value="2717"/>
</dbReference>
<dbReference type="STRING" id="10090.ENSMUSP00000023221"/>
<dbReference type="GlyCosmos" id="Q9WTK3">
    <property type="glycosylation" value="1 site, No reported glycans"/>
</dbReference>
<dbReference type="GlyGen" id="Q9WTK3">
    <property type="glycosylation" value="1 site"/>
</dbReference>
<dbReference type="PhosphoSitePlus" id="Q9WTK3"/>
<dbReference type="SwissPalm" id="Q9WTK3"/>
<dbReference type="PaxDb" id="10090-ENSMUSP00000023221"/>
<dbReference type="PeptideAtlas" id="Q9WTK3"/>
<dbReference type="ProteomicsDB" id="271139"/>
<dbReference type="Pumba" id="Q9WTK3"/>
<dbReference type="Antibodypedia" id="28266">
    <property type="antibodies" value="156 antibodies from 24 providers"/>
</dbReference>
<dbReference type="DNASU" id="14731"/>
<dbReference type="Ensembl" id="ENSMUST00000023221.13">
    <property type="protein sequence ID" value="ENSMUSP00000023221.7"/>
    <property type="gene ID" value="ENSMUSG00000022561.14"/>
</dbReference>
<dbReference type="GeneID" id="14731"/>
<dbReference type="KEGG" id="mmu:14731"/>
<dbReference type="UCSC" id="uc007wjq.1">
    <property type="organism name" value="mouse"/>
</dbReference>
<dbReference type="AGR" id="MGI:1202392"/>
<dbReference type="CTD" id="8733"/>
<dbReference type="MGI" id="MGI:1202392">
    <property type="gene designation" value="Gpaa1"/>
</dbReference>
<dbReference type="VEuPathDB" id="HostDB:ENSMUSG00000022561"/>
<dbReference type="eggNOG" id="KOG3566">
    <property type="taxonomic scope" value="Eukaryota"/>
</dbReference>
<dbReference type="GeneTree" id="ENSGT00390000013685"/>
<dbReference type="HOGENOM" id="CLU_007442_2_1_1"/>
<dbReference type="InParanoid" id="Q9WTK3"/>
<dbReference type="OMA" id="MAIALWM"/>
<dbReference type="OrthoDB" id="445301at2759"/>
<dbReference type="PhylomeDB" id="Q9WTK3"/>
<dbReference type="TreeFam" id="TF313030"/>
<dbReference type="Reactome" id="R-MMU-162791">
    <property type="pathway name" value="Attachment of GPI anchor to uPAR"/>
</dbReference>
<dbReference type="UniPathway" id="UPA00196"/>
<dbReference type="BioGRID-ORCS" id="14731">
    <property type="hits" value="20 hits in 81 CRISPR screens"/>
</dbReference>
<dbReference type="PRO" id="PR:Q9WTK3"/>
<dbReference type="Proteomes" id="UP000000589">
    <property type="component" value="Chromosome 15"/>
</dbReference>
<dbReference type="RNAct" id="Q9WTK3">
    <property type="molecule type" value="protein"/>
</dbReference>
<dbReference type="Bgee" id="ENSMUSG00000022561">
    <property type="expression patterns" value="Expressed in right kidney and 215 other cell types or tissues"/>
</dbReference>
<dbReference type="ExpressionAtlas" id="Q9WTK3">
    <property type="expression patterns" value="baseline and differential"/>
</dbReference>
<dbReference type="GO" id="GO:0005813">
    <property type="term" value="C:centrosome"/>
    <property type="evidence" value="ECO:0007669"/>
    <property type="project" value="Ensembl"/>
</dbReference>
<dbReference type="GO" id="GO:0005829">
    <property type="term" value="C:cytosol"/>
    <property type="evidence" value="ECO:0007669"/>
    <property type="project" value="Ensembl"/>
</dbReference>
<dbReference type="GO" id="GO:0042765">
    <property type="term" value="C:GPI-anchor transamidase complex"/>
    <property type="evidence" value="ECO:0000250"/>
    <property type="project" value="UniProtKB"/>
</dbReference>
<dbReference type="GO" id="GO:0005739">
    <property type="term" value="C:mitochondrion"/>
    <property type="evidence" value="ECO:0007669"/>
    <property type="project" value="Ensembl"/>
</dbReference>
<dbReference type="GO" id="GO:0005886">
    <property type="term" value="C:plasma membrane"/>
    <property type="evidence" value="ECO:0000250"/>
    <property type="project" value="MGI"/>
</dbReference>
<dbReference type="GO" id="GO:0034235">
    <property type="term" value="F:GPI anchor binding"/>
    <property type="evidence" value="ECO:0000250"/>
    <property type="project" value="UniProtKB"/>
</dbReference>
<dbReference type="GO" id="GO:0003923">
    <property type="term" value="F:GPI-anchor transamidase activity"/>
    <property type="evidence" value="ECO:0000304"/>
    <property type="project" value="MGI"/>
</dbReference>
<dbReference type="GO" id="GO:0016255">
    <property type="term" value="P:attachment of GPI anchor to protein"/>
    <property type="evidence" value="ECO:0000250"/>
    <property type="project" value="UniProtKB"/>
</dbReference>
<dbReference type="GO" id="GO:0006506">
    <property type="term" value="P:GPI anchor biosynthetic process"/>
    <property type="evidence" value="ECO:0000250"/>
    <property type="project" value="MGI"/>
</dbReference>
<dbReference type="GO" id="GO:0180046">
    <property type="term" value="P:GPI anchored protein biosynthesis"/>
    <property type="evidence" value="ECO:0000250"/>
    <property type="project" value="UniProtKB"/>
</dbReference>
<dbReference type="FunFam" id="3.40.630.10:FF:000047">
    <property type="entry name" value="Glycosylphosphatidylinositol anchor attachment 1 protein"/>
    <property type="match status" value="1"/>
</dbReference>
<dbReference type="Gene3D" id="3.40.630.10">
    <property type="entry name" value="Zn peptidases"/>
    <property type="match status" value="1"/>
</dbReference>
<dbReference type="InterPro" id="IPR007246">
    <property type="entry name" value="Gaa1"/>
</dbReference>
<dbReference type="PANTHER" id="PTHR13304">
    <property type="entry name" value="GLYCOSYLPHOSPHATIDYLINOSITOL ANCHOR ATTACHMENT 1 PROTEIN"/>
    <property type="match status" value="1"/>
</dbReference>
<dbReference type="PANTHER" id="PTHR13304:SF0">
    <property type="entry name" value="GLYCOSYLPHOSPHATIDYLINOSITOL ANCHOR ATTACHMENT 1 PROTEIN"/>
    <property type="match status" value="1"/>
</dbReference>
<dbReference type="Pfam" id="PF04114">
    <property type="entry name" value="Gaa1"/>
    <property type="match status" value="1"/>
</dbReference>
<dbReference type="PIRSF" id="PIRSF036762">
    <property type="entry name" value="GAA1"/>
    <property type="match status" value="1"/>
</dbReference>
<name>GPAA1_MOUSE</name>
<feature type="chain" id="PRO_0000087555" description="GPI-anchor transamidase component GPAA1">
    <location>
        <begin position="1"/>
        <end position="621"/>
    </location>
</feature>
<feature type="topological domain" description="Cytoplasmic" evidence="1">
    <location>
        <begin position="1"/>
        <end position="19"/>
    </location>
</feature>
<feature type="transmembrane region" description="Helical" evidence="1">
    <location>
        <begin position="20"/>
        <end position="41"/>
    </location>
</feature>
<feature type="topological domain" description="Lumenal" evidence="1">
    <location>
        <begin position="42"/>
        <end position="370"/>
    </location>
</feature>
<feature type="transmembrane region" description="Helical" evidence="1">
    <location>
        <begin position="371"/>
        <end position="393"/>
    </location>
</feature>
<feature type="topological domain" description="Cytoplasmic" evidence="1">
    <location>
        <begin position="394"/>
        <end position="425"/>
    </location>
</feature>
<feature type="transmembrane region" description="Helical" evidence="1">
    <location>
        <begin position="426"/>
        <end position="450"/>
    </location>
</feature>
<feature type="topological domain" description="Lumenal" evidence="1">
    <location>
        <begin position="451"/>
        <end position="462"/>
    </location>
</feature>
<feature type="transmembrane region" description="Helical" evidence="1">
    <location>
        <begin position="463"/>
        <end position="483"/>
    </location>
</feature>
<feature type="topological domain" description="Cytoplasmic" evidence="1">
    <location>
        <begin position="484"/>
        <end position="495"/>
    </location>
</feature>
<feature type="transmembrane region" description="Helical" evidence="1">
    <location>
        <begin position="496"/>
        <end position="519"/>
    </location>
</feature>
<feature type="transmembrane region" description="Helical" evidence="1">
    <location>
        <begin position="520"/>
        <end position="536"/>
    </location>
</feature>
<feature type="topological domain" description="Cytoplasmic" evidence="1">
    <location>
        <begin position="537"/>
        <end position="540"/>
    </location>
</feature>
<feature type="transmembrane region" description="Helical" evidence="1">
    <location>
        <begin position="541"/>
        <end position="563"/>
    </location>
</feature>
<feature type="topological domain" description="Lumenal" evidence="1">
    <location>
        <begin position="564"/>
        <end position="597"/>
    </location>
</feature>
<feature type="transmembrane region" description="Helical" evidence="1">
    <location>
        <begin position="598"/>
        <end position="619"/>
    </location>
</feature>
<feature type="topological domain" description="Cytoplasmic" evidence="1">
    <location>
        <begin position="620"/>
        <end position="621"/>
    </location>
</feature>
<feature type="binding site" evidence="1">
    <location>
        <position position="49"/>
    </location>
    <ligand>
        <name>a 2-acyl-6-[6-phosphoethanolamine-alpha-D-mannosyl-(1-&gt;2)-6-phosphoethanolamine-alpha-D-mannosyl-(1-&gt;6)-2-phosphoethanolamine-alpha-D-mannosyl-(1-&gt;4)-alpha-D-glucosaminyl]-1-(1-radyl,2-acyl-sn-glycero-3-phospho)-1D-myo-inositol</name>
        <dbReference type="ChEBI" id="CHEBI:144080"/>
    </ligand>
</feature>
<feature type="binding site" evidence="1">
    <location>
        <position position="51"/>
    </location>
    <ligand>
        <name>a 2-acyl-6-[6-phosphoethanolamine-alpha-D-mannosyl-(1-&gt;2)-6-phosphoethanolamine-alpha-D-mannosyl-(1-&gt;6)-2-phosphoethanolamine-alpha-D-mannosyl-(1-&gt;4)-alpha-D-glucosaminyl]-1-(1-radyl,2-acyl-sn-glycero-3-phospho)-1D-myo-inositol</name>
        <dbReference type="ChEBI" id="CHEBI:144080"/>
    </ligand>
</feature>
<feature type="binding site" evidence="1">
    <location>
        <position position="354"/>
    </location>
    <ligand>
        <name>a 2-acyl-6-[6-phosphoethanolamine-alpha-D-mannosyl-(1-&gt;2)-6-phosphoethanolamine-alpha-D-mannosyl-(1-&gt;6)-2-phosphoethanolamine-alpha-D-mannosyl-(1-&gt;4)-alpha-D-glucosaminyl]-1-(1-radyl,2-acyl-sn-glycero-3-phospho)-1D-myo-inositol</name>
        <dbReference type="ChEBI" id="CHEBI:144080"/>
    </ligand>
</feature>
<feature type="binding site" evidence="1">
    <location>
        <position position="355"/>
    </location>
    <ligand>
        <name>a 2-acyl-6-[6-phosphoethanolamine-alpha-D-mannosyl-(1-&gt;2)-6-phosphoethanolamine-alpha-D-mannosyl-(1-&gt;6)-2-phosphoethanolamine-alpha-D-mannosyl-(1-&gt;4)-alpha-D-glucosaminyl]-1-(1-radyl,2-acyl-sn-glycero-3-phospho)-1D-myo-inositol</name>
        <dbReference type="ChEBI" id="CHEBI:144080"/>
    </ligand>
</feature>
<feature type="binding site" evidence="1">
    <location>
        <position position="355"/>
    </location>
    <ligand>
        <name>Mg(2+)</name>
        <dbReference type="ChEBI" id="CHEBI:18420"/>
    </ligand>
</feature>
<feature type="binding site" evidence="1">
    <location>
        <position position="356"/>
    </location>
    <ligand>
        <name>a 2-acyl-6-[6-phosphoethanolamine-alpha-D-mannosyl-(1-&gt;2)-6-phosphoethanolamine-alpha-D-mannosyl-(1-&gt;6)-2-phosphoethanolamine-alpha-D-mannosyl-(1-&gt;4)-alpha-D-glucosaminyl]-1-(1-radyl,2-acyl-sn-glycero-3-phospho)-1D-myo-inositol</name>
        <dbReference type="ChEBI" id="CHEBI:144080"/>
    </ligand>
</feature>
<feature type="glycosylation site" description="N-linked (GlcNAc...) asparagine" evidence="2">
    <location>
        <position position="203"/>
    </location>
</feature>
<feature type="disulfide bond" evidence="1">
    <location>
        <begin position="259"/>
        <end position="266"/>
    </location>
</feature>
<reference key="1">
    <citation type="journal article" date="1999" name="Cytogenet. Cell Genet.">
        <title>Human and mouse GPAA1 (glycosylphosphatidylinositol anchor attachment 1) genes: genomic structures, chromosome loci and the presence of a minor class intron.</title>
        <authorList>
            <person name="Inoue N."/>
            <person name="Ohishi K."/>
            <person name="Endo Y."/>
            <person name="Fujita T."/>
            <person name="Takeda J."/>
            <person name="Kinoshita T."/>
        </authorList>
    </citation>
    <scope>NUCLEOTIDE SEQUENCE [GENOMIC DNA / MRNA]</scope>
    <source>
        <strain>129/SvJ</strain>
        <strain>C57BL/6J</strain>
    </source>
</reference>
<reference key="2">
    <citation type="journal article" date="2000" name="Am. J. Physiol.">
        <title>Cloning of murine glycosyl phosphatidylinositol anchor attachment protein, GPAA1.</title>
        <authorList>
            <person name="Hiroi Y."/>
            <person name="Chen R."/>
            <person name="Sawa H."/>
            <person name="Hosoda T."/>
            <person name="Kudoh S."/>
            <person name="Kobayashi Y."/>
            <person name="Aburatani H."/>
            <person name="Nagashima K."/>
            <person name="Nagai R."/>
            <person name="Yazaki Y."/>
            <person name="Medof M.E."/>
            <person name="Komuro I."/>
        </authorList>
    </citation>
    <scope>NUCLEOTIDE SEQUENCE [GENOMIC DNA / MRNA]</scope>
    <scope>FUNCTION</scope>
    <scope>TISSUE SPECIFICITY</scope>
    <source>
        <tissue>Heart</tissue>
    </source>
</reference>
<reference key="3">
    <citation type="journal article" date="2005" name="Science">
        <title>The transcriptional landscape of the mammalian genome.</title>
        <authorList>
            <person name="Carninci P."/>
            <person name="Kasukawa T."/>
            <person name="Katayama S."/>
            <person name="Gough J."/>
            <person name="Frith M.C."/>
            <person name="Maeda N."/>
            <person name="Oyama R."/>
            <person name="Ravasi T."/>
            <person name="Lenhard B."/>
            <person name="Wells C."/>
            <person name="Kodzius R."/>
            <person name="Shimokawa K."/>
            <person name="Bajic V.B."/>
            <person name="Brenner S.E."/>
            <person name="Batalov S."/>
            <person name="Forrest A.R."/>
            <person name="Zavolan M."/>
            <person name="Davis M.J."/>
            <person name="Wilming L.G."/>
            <person name="Aidinis V."/>
            <person name="Allen J.E."/>
            <person name="Ambesi-Impiombato A."/>
            <person name="Apweiler R."/>
            <person name="Aturaliya R.N."/>
            <person name="Bailey T.L."/>
            <person name="Bansal M."/>
            <person name="Baxter L."/>
            <person name="Beisel K.W."/>
            <person name="Bersano T."/>
            <person name="Bono H."/>
            <person name="Chalk A.M."/>
            <person name="Chiu K.P."/>
            <person name="Choudhary V."/>
            <person name="Christoffels A."/>
            <person name="Clutterbuck D.R."/>
            <person name="Crowe M.L."/>
            <person name="Dalla E."/>
            <person name="Dalrymple B.P."/>
            <person name="de Bono B."/>
            <person name="Della Gatta G."/>
            <person name="di Bernardo D."/>
            <person name="Down T."/>
            <person name="Engstrom P."/>
            <person name="Fagiolini M."/>
            <person name="Faulkner G."/>
            <person name="Fletcher C.F."/>
            <person name="Fukushima T."/>
            <person name="Furuno M."/>
            <person name="Futaki S."/>
            <person name="Gariboldi M."/>
            <person name="Georgii-Hemming P."/>
            <person name="Gingeras T.R."/>
            <person name="Gojobori T."/>
            <person name="Green R.E."/>
            <person name="Gustincich S."/>
            <person name="Harbers M."/>
            <person name="Hayashi Y."/>
            <person name="Hensch T.K."/>
            <person name="Hirokawa N."/>
            <person name="Hill D."/>
            <person name="Huminiecki L."/>
            <person name="Iacono M."/>
            <person name="Ikeo K."/>
            <person name="Iwama A."/>
            <person name="Ishikawa T."/>
            <person name="Jakt M."/>
            <person name="Kanapin A."/>
            <person name="Katoh M."/>
            <person name="Kawasawa Y."/>
            <person name="Kelso J."/>
            <person name="Kitamura H."/>
            <person name="Kitano H."/>
            <person name="Kollias G."/>
            <person name="Krishnan S.P."/>
            <person name="Kruger A."/>
            <person name="Kummerfeld S.K."/>
            <person name="Kurochkin I.V."/>
            <person name="Lareau L.F."/>
            <person name="Lazarevic D."/>
            <person name="Lipovich L."/>
            <person name="Liu J."/>
            <person name="Liuni S."/>
            <person name="McWilliam S."/>
            <person name="Madan Babu M."/>
            <person name="Madera M."/>
            <person name="Marchionni L."/>
            <person name="Matsuda H."/>
            <person name="Matsuzawa S."/>
            <person name="Miki H."/>
            <person name="Mignone F."/>
            <person name="Miyake S."/>
            <person name="Morris K."/>
            <person name="Mottagui-Tabar S."/>
            <person name="Mulder N."/>
            <person name="Nakano N."/>
            <person name="Nakauchi H."/>
            <person name="Ng P."/>
            <person name="Nilsson R."/>
            <person name="Nishiguchi S."/>
            <person name="Nishikawa S."/>
            <person name="Nori F."/>
            <person name="Ohara O."/>
            <person name="Okazaki Y."/>
            <person name="Orlando V."/>
            <person name="Pang K.C."/>
            <person name="Pavan W.J."/>
            <person name="Pavesi G."/>
            <person name="Pesole G."/>
            <person name="Petrovsky N."/>
            <person name="Piazza S."/>
            <person name="Reed J."/>
            <person name="Reid J.F."/>
            <person name="Ring B.Z."/>
            <person name="Ringwald M."/>
            <person name="Rost B."/>
            <person name="Ruan Y."/>
            <person name="Salzberg S.L."/>
            <person name="Sandelin A."/>
            <person name="Schneider C."/>
            <person name="Schoenbach C."/>
            <person name="Sekiguchi K."/>
            <person name="Semple C.A."/>
            <person name="Seno S."/>
            <person name="Sessa L."/>
            <person name="Sheng Y."/>
            <person name="Shibata Y."/>
            <person name="Shimada H."/>
            <person name="Shimada K."/>
            <person name="Silva D."/>
            <person name="Sinclair B."/>
            <person name="Sperling S."/>
            <person name="Stupka E."/>
            <person name="Sugiura K."/>
            <person name="Sultana R."/>
            <person name="Takenaka Y."/>
            <person name="Taki K."/>
            <person name="Tammoja K."/>
            <person name="Tan S.L."/>
            <person name="Tang S."/>
            <person name="Taylor M.S."/>
            <person name="Tegner J."/>
            <person name="Teichmann S.A."/>
            <person name="Ueda H.R."/>
            <person name="van Nimwegen E."/>
            <person name="Verardo R."/>
            <person name="Wei C.L."/>
            <person name="Yagi K."/>
            <person name="Yamanishi H."/>
            <person name="Zabarovsky E."/>
            <person name="Zhu S."/>
            <person name="Zimmer A."/>
            <person name="Hide W."/>
            <person name="Bult C."/>
            <person name="Grimmond S.M."/>
            <person name="Teasdale R.D."/>
            <person name="Liu E.T."/>
            <person name="Brusic V."/>
            <person name="Quackenbush J."/>
            <person name="Wahlestedt C."/>
            <person name="Mattick J.S."/>
            <person name="Hume D.A."/>
            <person name="Kai C."/>
            <person name="Sasaki D."/>
            <person name="Tomaru Y."/>
            <person name="Fukuda S."/>
            <person name="Kanamori-Katayama M."/>
            <person name="Suzuki M."/>
            <person name="Aoki J."/>
            <person name="Arakawa T."/>
            <person name="Iida J."/>
            <person name="Imamura K."/>
            <person name="Itoh M."/>
            <person name="Kato T."/>
            <person name="Kawaji H."/>
            <person name="Kawagashira N."/>
            <person name="Kawashima T."/>
            <person name="Kojima M."/>
            <person name="Kondo S."/>
            <person name="Konno H."/>
            <person name="Nakano K."/>
            <person name="Ninomiya N."/>
            <person name="Nishio T."/>
            <person name="Okada M."/>
            <person name="Plessy C."/>
            <person name="Shibata K."/>
            <person name="Shiraki T."/>
            <person name="Suzuki S."/>
            <person name="Tagami M."/>
            <person name="Waki K."/>
            <person name="Watahiki A."/>
            <person name="Okamura-Oho Y."/>
            <person name="Suzuki H."/>
            <person name="Kawai J."/>
            <person name="Hayashizaki Y."/>
        </authorList>
    </citation>
    <scope>NUCLEOTIDE SEQUENCE [LARGE SCALE MRNA]</scope>
    <source>
        <strain>C57BL/6J</strain>
        <tissue>Eye</tissue>
    </source>
</reference>
<reference key="4">
    <citation type="journal article" date="2004" name="Genome Res.">
        <title>The status, quality, and expansion of the NIH full-length cDNA project: the Mammalian Gene Collection (MGC).</title>
        <authorList>
            <consortium name="The MGC Project Team"/>
        </authorList>
    </citation>
    <scope>NUCLEOTIDE SEQUENCE [LARGE SCALE MRNA]</scope>
    <source>
        <tissue>Mammary tumor</tissue>
    </source>
</reference>
<reference key="5">
    <citation type="journal article" date="2000" name="Mol. Biol. Cell">
        <title>Gaa1p and gpi8p are components of a glycosylphosphatidylinositol (GPI) transamidase that mediates attachment of GPI to proteins.</title>
        <authorList>
            <person name="Ohishi K."/>
            <person name="Inoue N."/>
            <person name="Maeda Y."/>
            <person name="Takeda J."/>
            <person name="Riezman H."/>
            <person name="Kinoshita T."/>
        </authorList>
    </citation>
    <scope>FUNCTION</scope>
    <scope>INTERACTION WITH PIGK</scope>
</reference>
<reference key="6">
    <citation type="journal article" date="2010" name="Cell">
        <title>A tissue-specific atlas of mouse protein phosphorylation and expression.</title>
        <authorList>
            <person name="Huttlin E.L."/>
            <person name="Jedrychowski M.P."/>
            <person name="Elias J.E."/>
            <person name="Goswami T."/>
            <person name="Rad R."/>
            <person name="Beausoleil S.A."/>
            <person name="Villen J."/>
            <person name="Haas W."/>
            <person name="Sowa M.E."/>
            <person name="Gygi S.P."/>
        </authorList>
    </citation>
    <scope>IDENTIFICATION BY MASS SPECTROMETRY [LARGE SCALE ANALYSIS]</scope>
    <source>
        <tissue>Spleen</tissue>
        <tissue>Testis</tissue>
    </source>
</reference>
<comment type="function">
    <text evidence="1 3 4">Component of the glycosylphosphatidylinositol-anchor (GPI-anchor) transamidase (GPI-T) complex that catalyzes the formation of the linkage between a proprotein and a GPI-anchor and participates in GPI anchored protein biosynthesis (PubMed:10793132, PubMed:10898732). Binds GPI-anchor (By similarity).</text>
</comment>
<comment type="pathway">
    <text evidence="3 4">Glycolipid biosynthesis; glycosylphosphatidylinositol-anchor biosynthesis.</text>
</comment>
<comment type="subunit">
    <text evidence="1 3">Heteropentamer. Part of the GPI-anchor transamidase complex, consisting of PIGK, PIGT, PIGS, PIGU and GAA1 (By similarity). Interacts with PIGK (PubMed:10793132).</text>
</comment>
<comment type="subcellular location">
    <subcellularLocation>
        <location evidence="1">Endoplasmic reticulum membrane</location>
        <topology evidence="1">Multi-pass membrane protein</topology>
    </subcellularLocation>
</comment>
<comment type="tissue specificity">
    <text evidence="4">Ubiquitously expressed in fetal and adult tissues. Expressed at higher levels in fetal tissues than adult tissues. In embryos abundant in the choroid plexus, skeletal muscle,.</text>
</comment>
<accession>Q9WTK3</accession>
<accession>Q3TNU9</accession>
<accession>Q9R1U8</accession>
<organism>
    <name type="scientific">Mus musculus</name>
    <name type="common">Mouse</name>
    <dbReference type="NCBI Taxonomy" id="10090"/>
    <lineage>
        <taxon>Eukaryota</taxon>
        <taxon>Metazoa</taxon>
        <taxon>Chordata</taxon>
        <taxon>Craniata</taxon>
        <taxon>Vertebrata</taxon>
        <taxon>Euteleostomi</taxon>
        <taxon>Mammalia</taxon>
        <taxon>Eutheria</taxon>
        <taxon>Euarchontoglires</taxon>
        <taxon>Glires</taxon>
        <taxon>Rodentia</taxon>
        <taxon>Myomorpha</taxon>
        <taxon>Muroidea</taxon>
        <taxon>Muridae</taxon>
        <taxon>Murinae</taxon>
        <taxon>Mus</taxon>
        <taxon>Mus</taxon>
    </lineage>
</organism>
<gene>
    <name evidence="6" type="primary">Gpaa1</name>
    <name type="synonym">Gaa1</name>
</gene>